<dbReference type="EC" id="2.4.1.21" evidence="1"/>
<dbReference type="EMBL" id="CP000114">
    <property type="protein sequence ID" value="ABA45078.1"/>
    <property type="molecule type" value="Genomic_DNA"/>
</dbReference>
<dbReference type="RefSeq" id="WP_000699858.1">
    <property type="nucleotide sequence ID" value="NC_007432.1"/>
</dbReference>
<dbReference type="SMR" id="Q3K1K2"/>
<dbReference type="CAZy" id="GT5">
    <property type="family name" value="Glycosyltransferase Family 5"/>
</dbReference>
<dbReference type="KEGG" id="sak:SAK_0979"/>
<dbReference type="HOGENOM" id="CLU_009583_18_2_9"/>
<dbReference type="UniPathway" id="UPA00164"/>
<dbReference type="GO" id="GO:0009011">
    <property type="term" value="F:alpha-1,4-glucan glucosyltransferase (ADP-glucose donor) activity"/>
    <property type="evidence" value="ECO:0007669"/>
    <property type="project" value="UniProtKB-UniRule"/>
</dbReference>
<dbReference type="GO" id="GO:0004373">
    <property type="term" value="F:alpha-1,4-glucan glucosyltransferase (UDP-glucose donor) activity"/>
    <property type="evidence" value="ECO:0007669"/>
    <property type="project" value="InterPro"/>
</dbReference>
<dbReference type="GO" id="GO:0005978">
    <property type="term" value="P:glycogen biosynthetic process"/>
    <property type="evidence" value="ECO:0007669"/>
    <property type="project" value="UniProtKB-UniRule"/>
</dbReference>
<dbReference type="CDD" id="cd03791">
    <property type="entry name" value="GT5_Glycogen_synthase_DULL1-like"/>
    <property type="match status" value="1"/>
</dbReference>
<dbReference type="Gene3D" id="3.40.50.2000">
    <property type="entry name" value="Glycogen Phosphorylase B"/>
    <property type="match status" value="2"/>
</dbReference>
<dbReference type="HAMAP" id="MF_00484">
    <property type="entry name" value="Glycogen_synth"/>
    <property type="match status" value="1"/>
</dbReference>
<dbReference type="InterPro" id="IPR001296">
    <property type="entry name" value="Glyco_trans_1"/>
</dbReference>
<dbReference type="InterPro" id="IPR011835">
    <property type="entry name" value="GS/SS"/>
</dbReference>
<dbReference type="InterPro" id="IPR013534">
    <property type="entry name" value="Starch_synth_cat_dom"/>
</dbReference>
<dbReference type="NCBIfam" id="TIGR02095">
    <property type="entry name" value="glgA"/>
    <property type="match status" value="1"/>
</dbReference>
<dbReference type="NCBIfam" id="NF001898">
    <property type="entry name" value="PRK00654.1-1"/>
    <property type="match status" value="1"/>
</dbReference>
<dbReference type="PANTHER" id="PTHR45825:SF11">
    <property type="entry name" value="ALPHA AMYLASE DOMAIN-CONTAINING PROTEIN"/>
    <property type="match status" value="1"/>
</dbReference>
<dbReference type="PANTHER" id="PTHR45825">
    <property type="entry name" value="GRANULE-BOUND STARCH SYNTHASE 1, CHLOROPLASTIC/AMYLOPLASTIC"/>
    <property type="match status" value="1"/>
</dbReference>
<dbReference type="Pfam" id="PF08323">
    <property type="entry name" value="Glyco_transf_5"/>
    <property type="match status" value="1"/>
</dbReference>
<dbReference type="Pfam" id="PF00534">
    <property type="entry name" value="Glycos_transf_1"/>
    <property type="match status" value="1"/>
</dbReference>
<dbReference type="SUPFAM" id="SSF53756">
    <property type="entry name" value="UDP-Glycosyltransferase/glycogen phosphorylase"/>
    <property type="match status" value="1"/>
</dbReference>
<feature type="chain" id="PRO_0000230266" description="Glycogen synthase">
    <location>
        <begin position="1"/>
        <end position="476"/>
    </location>
</feature>
<feature type="binding site" evidence="1">
    <location>
        <position position="15"/>
    </location>
    <ligand>
        <name>ADP-alpha-D-glucose</name>
        <dbReference type="ChEBI" id="CHEBI:57498"/>
    </ligand>
</feature>
<accession>Q3K1K2</accession>
<gene>
    <name evidence="1" type="primary">glgA</name>
    <name type="ordered locus">SAK_0979</name>
</gene>
<proteinExistence type="inferred from homology"/>
<keyword id="KW-0320">Glycogen biosynthesis</keyword>
<keyword id="KW-0328">Glycosyltransferase</keyword>
<keyword id="KW-0808">Transferase</keyword>
<organism>
    <name type="scientific">Streptococcus agalactiae serotype Ia (strain ATCC 27591 / A909 / CDC SS700)</name>
    <dbReference type="NCBI Taxonomy" id="205921"/>
    <lineage>
        <taxon>Bacteria</taxon>
        <taxon>Bacillati</taxon>
        <taxon>Bacillota</taxon>
        <taxon>Bacilli</taxon>
        <taxon>Lactobacillales</taxon>
        <taxon>Streptococcaceae</taxon>
        <taxon>Streptococcus</taxon>
    </lineage>
</organism>
<comment type="function">
    <text evidence="1">Synthesizes alpha-1,4-glucan chains using ADP-glucose.</text>
</comment>
<comment type="catalytic activity">
    <reaction evidence="1">
        <text>[(1-&gt;4)-alpha-D-glucosyl](n) + ADP-alpha-D-glucose = [(1-&gt;4)-alpha-D-glucosyl](n+1) + ADP + H(+)</text>
        <dbReference type="Rhea" id="RHEA:18189"/>
        <dbReference type="Rhea" id="RHEA-COMP:9584"/>
        <dbReference type="Rhea" id="RHEA-COMP:9587"/>
        <dbReference type="ChEBI" id="CHEBI:15378"/>
        <dbReference type="ChEBI" id="CHEBI:15444"/>
        <dbReference type="ChEBI" id="CHEBI:57498"/>
        <dbReference type="ChEBI" id="CHEBI:456216"/>
        <dbReference type="EC" id="2.4.1.21"/>
    </reaction>
</comment>
<comment type="pathway">
    <text evidence="1">Glycan biosynthesis; glycogen biosynthesis.</text>
</comment>
<comment type="similarity">
    <text evidence="1">Belongs to the glycosyltransferase 1 family. Bacterial/plant glycogen synthase subfamily.</text>
</comment>
<reference key="1">
    <citation type="journal article" date="2005" name="Proc. Natl. Acad. Sci. U.S.A.">
        <title>Genome analysis of multiple pathogenic isolates of Streptococcus agalactiae: implications for the microbial 'pan-genome'.</title>
        <authorList>
            <person name="Tettelin H."/>
            <person name="Masignani V."/>
            <person name="Cieslewicz M.J."/>
            <person name="Donati C."/>
            <person name="Medini D."/>
            <person name="Ward N.L."/>
            <person name="Angiuoli S.V."/>
            <person name="Crabtree J."/>
            <person name="Jones A.L."/>
            <person name="Durkin A.S."/>
            <person name="DeBoy R.T."/>
            <person name="Davidsen T.M."/>
            <person name="Mora M."/>
            <person name="Scarselli M."/>
            <person name="Margarit y Ros I."/>
            <person name="Peterson J.D."/>
            <person name="Hauser C.R."/>
            <person name="Sundaram J.P."/>
            <person name="Nelson W.C."/>
            <person name="Madupu R."/>
            <person name="Brinkac L.M."/>
            <person name="Dodson R.J."/>
            <person name="Rosovitz M.J."/>
            <person name="Sullivan S.A."/>
            <person name="Daugherty S.C."/>
            <person name="Haft D.H."/>
            <person name="Selengut J."/>
            <person name="Gwinn M.L."/>
            <person name="Zhou L."/>
            <person name="Zafar N."/>
            <person name="Khouri H."/>
            <person name="Radune D."/>
            <person name="Dimitrov G."/>
            <person name="Watkins K."/>
            <person name="O'Connor K.J."/>
            <person name="Smith S."/>
            <person name="Utterback T.R."/>
            <person name="White O."/>
            <person name="Rubens C.E."/>
            <person name="Grandi G."/>
            <person name="Madoff L.C."/>
            <person name="Kasper D.L."/>
            <person name="Telford J.L."/>
            <person name="Wessels M.R."/>
            <person name="Rappuoli R."/>
            <person name="Fraser C.M."/>
        </authorList>
    </citation>
    <scope>NUCLEOTIDE SEQUENCE [LARGE SCALE GENOMIC DNA]</scope>
    <source>
        <strain>ATCC 27591 / A909 / CDC SS700</strain>
    </source>
</reference>
<evidence type="ECO:0000255" key="1">
    <source>
        <dbReference type="HAMAP-Rule" id="MF_00484"/>
    </source>
</evidence>
<protein>
    <recommendedName>
        <fullName evidence="1">Glycogen synthase</fullName>
        <ecNumber evidence="1">2.4.1.21</ecNumber>
    </recommendedName>
    <alternativeName>
        <fullName evidence="1">Starch [bacterial glycogen] synthase</fullName>
    </alternativeName>
</protein>
<name>GLGA_STRA1</name>
<sequence>MKIMFVAAEGAPFAKTGGLGDVIGALPKSLSKKGHDVAVVMPYYDMVDQKFGDQIENLMYFYTDVGWRHQYVGVKRLSQDNVTFYFIDNQYYFYRGHVYGDWDDGERFAYFQLAALELMEKIDFIPDVLHVHDYHTAMIPFLLKEKYHWIQAYNNIRAVFTIHNIEFQGQFGPEMLGDLFGVGAERYEDGTLRWNNCLNWMKAAILYSDRVTTVSPSYANEIKTPEFGKGLDQIMRMEAGKLSGIVNGIDSDLLNPETDAFLPYHFSKSNLEGKIKNKLALQENLGLPQDKNVPLIGIVSRLTDQKGFDIIASELDNMLQQDIQMVILGTGYHHFEETFSYFASRYPEKLSANITFDLRLAQQIYAASDIFMMPSAFEPCGLSQMMAMRYGSLPLVHEVGGLKDTVVAFNQFDGSGTGFSFNHFSGYWLMQTLKLALEVYNDYPEAWKKLQWQAMSKDFSWDTACVAYEQLYQQLQ</sequence>